<accession>Q04FF4</accession>
<reference key="1">
    <citation type="journal article" date="2006" name="Proc. Natl. Acad. Sci. U.S.A.">
        <title>Comparative genomics of the lactic acid bacteria.</title>
        <authorList>
            <person name="Makarova K.S."/>
            <person name="Slesarev A."/>
            <person name="Wolf Y.I."/>
            <person name="Sorokin A."/>
            <person name="Mirkin B."/>
            <person name="Koonin E.V."/>
            <person name="Pavlov A."/>
            <person name="Pavlova N."/>
            <person name="Karamychev V."/>
            <person name="Polouchine N."/>
            <person name="Shakhova V."/>
            <person name="Grigoriev I."/>
            <person name="Lou Y."/>
            <person name="Rohksar D."/>
            <person name="Lucas S."/>
            <person name="Huang K."/>
            <person name="Goodstein D.M."/>
            <person name="Hawkins T."/>
            <person name="Plengvidhya V."/>
            <person name="Welker D."/>
            <person name="Hughes J."/>
            <person name="Goh Y."/>
            <person name="Benson A."/>
            <person name="Baldwin K."/>
            <person name="Lee J.-H."/>
            <person name="Diaz-Muniz I."/>
            <person name="Dosti B."/>
            <person name="Smeianov V."/>
            <person name="Wechter W."/>
            <person name="Barabote R."/>
            <person name="Lorca G."/>
            <person name="Altermann E."/>
            <person name="Barrangou R."/>
            <person name="Ganesan B."/>
            <person name="Xie Y."/>
            <person name="Rawsthorne H."/>
            <person name="Tamir D."/>
            <person name="Parker C."/>
            <person name="Breidt F."/>
            <person name="Broadbent J.R."/>
            <person name="Hutkins R."/>
            <person name="O'Sullivan D."/>
            <person name="Steele J."/>
            <person name="Unlu G."/>
            <person name="Saier M.H. Jr."/>
            <person name="Klaenhammer T."/>
            <person name="Richardson P."/>
            <person name="Kozyavkin S."/>
            <person name="Weimer B.C."/>
            <person name="Mills D.A."/>
        </authorList>
    </citation>
    <scope>NUCLEOTIDE SEQUENCE [LARGE SCALE GENOMIC DNA]</scope>
    <source>
        <strain>ATCC BAA-331 / PSU-1</strain>
    </source>
</reference>
<gene>
    <name type="ordered locus">OEOE_0901</name>
</gene>
<protein>
    <recommendedName>
        <fullName evidence="1">UPF0342 protein OEOE_0901</fullName>
    </recommendedName>
</protein>
<organism>
    <name type="scientific">Oenococcus oeni (strain ATCC BAA-331 / PSU-1)</name>
    <dbReference type="NCBI Taxonomy" id="203123"/>
    <lineage>
        <taxon>Bacteria</taxon>
        <taxon>Bacillati</taxon>
        <taxon>Bacillota</taxon>
        <taxon>Bacilli</taxon>
        <taxon>Lactobacillales</taxon>
        <taxon>Lactobacillaceae</taxon>
        <taxon>Oenococcus</taxon>
    </lineage>
</organism>
<proteinExistence type="inferred from homology"/>
<sequence>MATLFDQAKLMARELQDSDEFKQLSTALAKVRADQEANSAFHDFQVAQKEIQELQSKGEEPKPEQIQRWQTTAQKAQQLKPIKDLSVVEQNLNNMLGEVNEIITAPLNELYLNN</sequence>
<comment type="similarity">
    <text evidence="1">Belongs to the UPF0342 family.</text>
</comment>
<dbReference type="EMBL" id="CP000411">
    <property type="protein sequence ID" value="ABJ56818.1"/>
    <property type="molecule type" value="Genomic_DNA"/>
</dbReference>
<dbReference type="RefSeq" id="WP_002820559.1">
    <property type="nucleotide sequence ID" value="NC_008528.1"/>
</dbReference>
<dbReference type="SMR" id="Q04FF4"/>
<dbReference type="STRING" id="203123.OEOE_0901"/>
<dbReference type="KEGG" id="ooe:OEOE_0901"/>
<dbReference type="eggNOG" id="COG3679">
    <property type="taxonomic scope" value="Bacteria"/>
</dbReference>
<dbReference type="HOGENOM" id="CLU_140243_3_1_9"/>
<dbReference type="Proteomes" id="UP000000774">
    <property type="component" value="Chromosome"/>
</dbReference>
<dbReference type="Gene3D" id="1.20.1500.10">
    <property type="entry name" value="YheA/YmcA-like"/>
    <property type="match status" value="1"/>
</dbReference>
<dbReference type="HAMAP" id="MF_01526">
    <property type="entry name" value="UPF0342"/>
    <property type="match status" value="1"/>
</dbReference>
<dbReference type="InterPro" id="IPR010368">
    <property type="entry name" value="Com_YlbF"/>
</dbReference>
<dbReference type="InterPro" id="IPR023378">
    <property type="entry name" value="YheA/YmcA-like_dom_sf"/>
</dbReference>
<dbReference type="Pfam" id="PF06133">
    <property type="entry name" value="Com_YlbF"/>
    <property type="match status" value="1"/>
</dbReference>
<dbReference type="SUPFAM" id="SSF158622">
    <property type="entry name" value="YheA/YmcA-like"/>
    <property type="match status" value="1"/>
</dbReference>
<feature type="chain" id="PRO_0000296976" description="UPF0342 protein OEOE_0901">
    <location>
        <begin position="1"/>
        <end position="114"/>
    </location>
</feature>
<name>Y901_OENOB</name>
<keyword id="KW-1185">Reference proteome</keyword>
<evidence type="ECO:0000255" key="1">
    <source>
        <dbReference type="HAMAP-Rule" id="MF_01526"/>
    </source>
</evidence>